<feature type="chain" id="PRO_1000082724" description="DNA gyrase inhibitor YacG">
    <location>
        <begin position="1"/>
        <end position="60"/>
    </location>
</feature>
<feature type="binding site" evidence="1">
    <location>
        <position position="15"/>
    </location>
    <ligand>
        <name>Zn(2+)</name>
        <dbReference type="ChEBI" id="CHEBI:29105"/>
    </ligand>
</feature>
<feature type="binding site" evidence="1">
    <location>
        <position position="18"/>
    </location>
    <ligand>
        <name>Zn(2+)</name>
        <dbReference type="ChEBI" id="CHEBI:29105"/>
    </ligand>
</feature>
<feature type="binding site" evidence="1">
    <location>
        <position position="30"/>
    </location>
    <ligand>
        <name>Zn(2+)</name>
        <dbReference type="ChEBI" id="CHEBI:29105"/>
    </ligand>
</feature>
<feature type="binding site" evidence="1">
    <location>
        <position position="34"/>
    </location>
    <ligand>
        <name>Zn(2+)</name>
        <dbReference type="ChEBI" id="CHEBI:29105"/>
    </ligand>
</feature>
<reference key="1">
    <citation type="submission" date="2006-03" db="EMBL/GenBank/DDBJ databases">
        <title>Complete sequence of chromosome of Nitrobacter hamburgensis X14.</title>
        <authorList>
            <consortium name="US DOE Joint Genome Institute"/>
            <person name="Copeland A."/>
            <person name="Lucas S."/>
            <person name="Lapidus A."/>
            <person name="Barry K."/>
            <person name="Detter J.C."/>
            <person name="Glavina del Rio T."/>
            <person name="Hammon N."/>
            <person name="Israni S."/>
            <person name="Dalin E."/>
            <person name="Tice H."/>
            <person name="Pitluck S."/>
            <person name="Chain P."/>
            <person name="Malfatti S."/>
            <person name="Shin M."/>
            <person name="Vergez L."/>
            <person name="Schmutz J."/>
            <person name="Larimer F."/>
            <person name="Land M."/>
            <person name="Hauser L."/>
            <person name="Kyrpides N."/>
            <person name="Ivanova N."/>
            <person name="Ward B."/>
            <person name="Arp D."/>
            <person name="Klotz M."/>
            <person name="Stein L."/>
            <person name="O'Mullan G."/>
            <person name="Starkenburg S."/>
            <person name="Sayavedra L."/>
            <person name="Poret-Peterson A.T."/>
            <person name="Gentry M.E."/>
            <person name="Bruce D."/>
            <person name="Richardson P."/>
        </authorList>
    </citation>
    <scope>NUCLEOTIDE SEQUENCE [LARGE SCALE GENOMIC DNA]</scope>
    <source>
        <strain>DSM 10229 / NCIMB 13809 / X14</strain>
    </source>
</reference>
<comment type="function">
    <text evidence="1">Inhibits all the catalytic activities of DNA gyrase by preventing its interaction with DNA. Acts by binding directly to the C-terminal domain of GyrB, which probably disrupts DNA binding by the gyrase.</text>
</comment>
<comment type="cofactor">
    <cofactor evidence="1">
        <name>Zn(2+)</name>
        <dbReference type="ChEBI" id="CHEBI:29105"/>
    </cofactor>
    <text evidence="1">Binds 1 zinc ion.</text>
</comment>
<comment type="subunit">
    <text evidence="1">Interacts with GyrB.</text>
</comment>
<comment type="similarity">
    <text evidence="1">Belongs to the DNA gyrase inhibitor YacG family.</text>
</comment>
<organism>
    <name type="scientific">Nitrobacter hamburgensis (strain DSM 10229 / NCIMB 13809 / X14)</name>
    <dbReference type="NCBI Taxonomy" id="323097"/>
    <lineage>
        <taxon>Bacteria</taxon>
        <taxon>Pseudomonadati</taxon>
        <taxon>Pseudomonadota</taxon>
        <taxon>Alphaproteobacteria</taxon>
        <taxon>Hyphomicrobiales</taxon>
        <taxon>Nitrobacteraceae</taxon>
        <taxon>Nitrobacter</taxon>
    </lineage>
</organism>
<sequence>MPARKPAGARPEKPCPICGKPAVAASRPFCSERCRDVDLNRWLSGSYVIPVSKTDGEDAE</sequence>
<evidence type="ECO:0000255" key="1">
    <source>
        <dbReference type="HAMAP-Rule" id="MF_00649"/>
    </source>
</evidence>
<gene>
    <name evidence="1" type="primary">yacG</name>
    <name type="ordered locus">Nham_0293</name>
</gene>
<accession>Q1QRF8</accession>
<name>YACG_NITHX</name>
<dbReference type="EMBL" id="CP000319">
    <property type="protein sequence ID" value="ABE61189.1"/>
    <property type="molecule type" value="Genomic_DNA"/>
</dbReference>
<dbReference type="RefSeq" id="WP_011508893.1">
    <property type="nucleotide sequence ID" value="NC_007964.1"/>
</dbReference>
<dbReference type="SMR" id="Q1QRF8"/>
<dbReference type="STRING" id="323097.Nham_0293"/>
<dbReference type="KEGG" id="nha:Nham_0293"/>
<dbReference type="eggNOG" id="COG3024">
    <property type="taxonomic scope" value="Bacteria"/>
</dbReference>
<dbReference type="HOGENOM" id="CLU_178280_2_0_5"/>
<dbReference type="OrthoDB" id="9809663at2"/>
<dbReference type="Proteomes" id="UP000001953">
    <property type="component" value="Chromosome"/>
</dbReference>
<dbReference type="GO" id="GO:0008657">
    <property type="term" value="F:DNA topoisomerase type II (double strand cut, ATP-hydrolyzing) inhibitor activity"/>
    <property type="evidence" value="ECO:0007669"/>
    <property type="project" value="UniProtKB-UniRule"/>
</dbReference>
<dbReference type="GO" id="GO:0008270">
    <property type="term" value="F:zinc ion binding"/>
    <property type="evidence" value="ECO:0007669"/>
    <property type="project" value="UniProtKB-UniRule"/>
</dbReference>
<dbReference type="GO" id="GO:0006355">
    <property type="term" value="P:regulation of DNA-templated transcription"/>
    <property type="evidence" value="ECO:0007669"/>
    <property type="project" value="InterPro"/>
</dbReference>
<dbReference type="Gene3D" id="3.30.50.10">
    <property type="entry name" value="Erythroid Transcription Factor GATA-1, subunit A"/>
    <property type="match status" value="1"/>
</dbReference>
<dbReference type="HAMAP" id="MF_00649">
    <property type="entry name" value="DNA_gyrase_inhibitor_YacG"/>
    <property type="match status" value="1"/>
</dbReference>
<dbReference type="InterPro" id="IPR005584">
    <property type="entry name" value="DNA_gyrase_inhibitor_YacG"/>
</dbReference>
<dbReference type="InterPro" id="IPR013088">
    <property type="entry name" value="Znf_NHR/GATA"/>
</dbReference>
<dbReference type="NCBIfam" id="NF002362">
    <property type="entry name" value="PRK01343.1"/>
    <property type="match status" value="1"/>
</dbReference>
<dbReference type="PANTHER" id="PTHR36150">
    <property type="entry name" value="DNA GYRASE INHIBITOR YACG"/>
    <property type="match status" value="1"/>
</dbReference>
<dbReference type="PANTHER" id="PTHR36150:SF1">
    <property type="entry name" value="DNA GYRASE INHIBITOR YACG"/>
    <property type="match status" value="1"/>
</dbReference>
<dbReference type="Pfam" id="PF03884">
    <property type="entry name" value="YacG"/>
    <property type="match status" value="1"/>
</dbReference>
<dbReference type="SUPFAM" id="SSF57716">
    <property type="entry name" value="Glucocorticoid receptor-like (DNA-binding domain)"/>
    <property type="match status" value="1"/>
</dbReference>
<proteinExistence type="inferred from homology"/>
<protein>
    <recommendedName>
        <fullName evidence="1">DNA gyrase inhibitor YacG</fullName>
    </recommendedName>
</protein>
<keyword id="KW-0479">Metal-binding</keyword>
<keyword id="KW-1185">Reference proteome</keyword>
<keyword id="KW-0862">Zinc</keyword>